<proteinExistence type="inferred from homology"/>
<reference key="1">
    <citation type="journal article" date="2001" name="Proc. Natl. Acad. Sci. U.S.A.">
        <title>Complete genome sequence of Caulobacter crescentus.</title>
        <authorList>
            <person name="Nierman W.C."/>
            <person name="Feldblyum T.V."/>
            <person name="Laub M.T."/>
            <person name="Paulsen I.T."/>
            <person name="Nelson K.E."/>
            <person name="Eisen J.A."/>
            <person name="Heidelberg J.F."/>
            <person name="Alley M.R.K."/>
            <person name="Ohta N."/>
            <person name="Maddock J.R."/>
            <person name="Potocka I."/>
            <person name="Nelson W.C."/>
            <person name="Newton A."/>
            <person name="Stephens C."/>
            <person name="Phadke N.D."/>
            <person name="Ely B."/>
            <person name="DeBoy R.T."/>
            <person name="Dodson R.J."/>
            <person name="Durkin A.S."/>
            <person name="Gwinn M.L."/>
            <person name="Haft D.H."/>
            <person name="Kolonay J.F."/>
            <person name="Smit J."/>
            <person name="Craven M.B."/>
            <person name="Khouri H.M."/>
            <person name="Shetty J."/>
            <person name="Berry K.J."/>
            <person name="Utterback T.R."/>
            <person name="Tran K."/>
            <person name="Wolf A.M."/>
            <person name="Vamathevan J.J."/>
            <person name="Ermolaeva M.D."/>
            <person name="White O."/>
            <person name="Salzberg S.L."/>
            <person name="Venter J.C."/>
            <person name="Shapiro L."/>
            <person name="Fraser C.M."/>
        </authorList>
    </citation>
    <scope>NUCLEOTIDE SEQUENCE [LARGE SCALE GENOMIC DNA]</scope>
    <source>
        <strain>ATCC 19089 / CIP 103742 / CB 15</strain>
    </source>
</reference>
<comment type="function">
    <text evidence="1">Cell wall formation. Catalyzes the addition of glutamate to the nucleotide precursor UDP-N-acetylmuramoyl-L-alanine (UMA).</text>
</comment>
<comment type="catalytic activity">
    <reaction evidence="1">
        <text>UDP-N-acetyl-alpha-D-muramoyl-L-alanine + D-glutamate + ATP = UDP-N-acetyl-alpha-D-muramoyl-L-alanyl-D-glutamate + ADP + phosphate + H(+)</text>
        <dbReference type="Rhea" id="RHEA:16429"/>
        <dbReference type="ChEBI" id="CHEBI:15378"/>
        <dbReference type="ChEBI" id="CHEBI:29986"/>
        <dbReference type="ChEBI" id="CHEBI:30616"/>
        <dbReference type="ChEBI" id="CHEBI:43474"/>
        <dbReference type="ChEBI" id="CHEBI:83898"/>
        <dbReference type="ChEBI" id="CHEBI:83900"/>
        <dbReference type="ChEBI" id="CHEBI:456216"/>
        <dbReference type="EC" id="6.3.2.9"/>
    </reaction>
</comment>
<comment type="pathway">
    <text evidence="1">Cell wall biogenesis; peptidoglycan biosynthesis.</text>
</comment>
<comment type="subcellular location">
    <subcellularLocation>
        <location evidence="1">Cytoplasm</location>
    </subcellularLocation>
</comment>
<comment type="similarity">
    <text evidence="1">Belongs to the MurCDEF family.</text>
</comment>
<protein>
    <recommendedName>
        <fullName evidence="1">UDP-N-acetylmuramoylalanine--D-glutamate ligase</fullName>
        <ecNumber evidence="1">6.3.2.9</ecNumber>
    </recommendedName>
    <alternativeName>
        <fullName evidence="1">D-glutamic acid-adding enzyme</fullName>
    </alternativeName>
    <alternativeName>
        <fullName evidence="1">UDP-N-acetylmuramoyl-L-alanyl-D-glutamate synthetase</fullName>
    </alternativeName>
</protein>
<sequence length="471" mass="49299">MIPVRGFEDKTVAVFGLGRTGLTAARALIAGGAKVALWDEKPASREAAAAEGFAVVDLQAADWSQFAALMLSPGVPLSHPKPHWTVEKARAAGVEVLGDVELFARTVNAAPAHKRPKIIAITGTNGKSTTTALIGHLCASAGRDTRVGGNIGLGVLGLEDMHGGAVYVLELSSYQLDLTSSLKPDAVVLLNISPDHLDRHGGMDGYIAAKRRIFLNQGKGDTAIIGVDDAWCQQICTEITAANRRTIWPISAGKAMGRGVYALQGVLYDATGERVVEVADILRARSLPGRHNWQNAAAAYAAARAIGISMQDAVDGLMTFPGLAHRMETVGKIGKVRFVNDSKATNADAARQAMSSYPKFYWIAGGVAKAGGIDDLKDLFPRIAKAYLIGEAAEPFSWTLAGKAECVLSGTLEKAVQQAYADAAASGEEAIVLLSPACASFDQFSDFEARGEAFRAAVNGLTAGGGKAAVA</sequence>
<keyword id="KW-0067">ATP-binding</keyword>
<keyword id="KW-0131">Cell cycle</keyword>
<keyword id="KW-0132">Cell division</keyword>
<keyword id="KW-0133">Cell shape</keyword>
<keyword id="KW-0961">Cell wall biogenesis/degradation</keyword>
<keyword id="KW-0963">Cytoplasm</keyword>
<keyword id="KW-0436">Ligase</keyword>
<keyword id="KW-0547">Nucleotide-binding</keyword>
<keyword id="KW-0573">Peptidoglycan synthesis</keyword>
<keyword id="KW-1185">Reference proteome</keyword>
<feature type="chain" id="PRO_0000108991" description="UDP-N-acetylmuramoylalanine--D-glutamate ligase">
    <location>
        <begin position="1"/>
        <end position="471"/>
    </location>
</feature>
<feature type="binding site" evidence="1">
    <location>
        <begin position="123"/>
        <end position="129"/>
    </location>
    <ligand>
        <name>ATP</name>
        <dbReference type="ChEBI" id="CHEBI:30616"/>
    </ligand>
</feature>
<accession>Q9A597</accession>
<evidence type="ECO:0000255" key="1">
    <source>
        <dbReference type="HAMAP-Rule" id="MF_00639"/>
    </source>
</evidence>
<dbReference type="EC" id="6.3.2.9" evidence="1"/>
<dbReference type="EMBL" id="AE005673">
    <property type="protein sequence ID" value="AAK24527.1"/>
    <property type="molecule type" value="Genomic_DNA"/>
</dbReference>
<dbReference type="PIR" id="C87566">
    <property type="entry name" value="C87566"/>
</dbReference>
<dbReference type="RefSeq" id="NP_421359.1">
    <property type="nucleotide sequence ID" value="NC_002696.2"/>
</dbReference>
<dbReference type="RefSeq" id="WP_010920413.1">
    <property type="nucleotide sequence ID" value="NC_002696.2"/>
</dbReference>
<dbReference type="SMR" id="Q9A597"/>
<dbReference type="STRING" id="190650.CC_2556"/>
<dbReference type="EnsemblBacteria" id="AAK24527">
    <property type="protein sequence ID" value="AAK24527"/>
    <property type="gene ID" value="CC_2556"/>
</dbReference>
<dbReference type="KEGG" id="ccr:CC_2556"/>
<dbReference type="PATRIC" id="fig|190650.5.peg.2569"/>
<dbReference type="eggNOG" id="COG0771">
    <property type="taxonomic scope" value="Bacteria"/>
</dbReference>
<dbReference type="HOGENOM" id="CLU_032540_3_0_5"/>
<dbReference type="BioCyc" id="CAULO:CC2556-MONOMER"/>
<dbReference type="UniPathway" id="UPA00219"/>
<dbReference type="Proteomes" id="UP000001816">
    <property type="component" value="Chromosome"/>
</dbReference>
<dbReference type="GO" id="GO:0005737">
    <property type="term" value="C:cytoplasm"/>
    <property type="evidence" value="ECO:0007669"/>
    <property type="project" value="UniProtKB-SubCell"/>
</dbReference>
<dbReference type="GO" id="GO:0005524">
    <property type="term" value="F:ATP binding"/>
    <property type="evidence" value="ECO:0007669"/>
    <property type="project" value="UniProtKB-UniRule"/>
</dbReference>
<dbReference type="GO" id="GO:0008764">
    <property type="term" value="F:UDP-N-acetylmuramoylalanine-D-glutamate ligase activity"/>
    <property type="evidence" value="ECO:0007669"/>
    <property type="project" value="UniProtKB-UniRule"/>
</dbReference>
<dbReference type="GO" id="GO:0051301">
    <property type="term" value="P:cell division"/>
    <property type="evidence" value="ECO:0007669"/>
    <property type="project" value="UniProtKB-KW"/>
</dbReference>
<dbReference type="GO" id="GO:0071555">
    <property type="term" value="P:cell wall organization"/>
    <property type="evidence" value="ECO:0007669"/>
    <property type="project" value="UniProtKB-KW"/>
</dbReference>
<dbReference type="GO" id="GO:0009252">
    <property type="term" value="P:peptidoglycan biosynthetic process"/>
    <property type="evidence" value="ECO:0007669"/>
    <property type="project" value="UniProtKB-UniRule"/>
</dbReference>
<dbReference type="GO" id="GO:0008360">
    <property type="term" value="P:regulation of cell shape"/>
    <property type="evidence" value="ECO:0007669"/>
    <property type="project" value="UniProtKB-KW"/>
</dbReference>
<dbReference type="Gene3D" id="3.90.190.20">
    <property type="entry name" value="Mur ligase, C-terminal domain"/>
    <property type="match status" value="1"/>
</dbReference>
<dbReference type="Gene3D" id="3.40.1190.10">
    <property type="entry name" value="Mur-like, catalytic domain"/>
    <property type="match status" value="1"/>
</dbReference>
<dbReference type="Gene3D" id="3.40.50.720">
    <property type="entry name" value="NAD(P)-binding Rossmann-like Domain"/>
    <property type="match status" value="1"/>
</dbReference>
<dbReference type="HAMAP" id="MF_00639">
    <property type="entry name" value="MurD"/>
    <property type="match status" value="1"/>
</dbReference>
<dbReference type="InterPro" id="IPR036565">
    <property type="entry name" value="Mur-like_cat_sf"/>
</dbReference>
<dbReference type="InterPro" id="IPR004101">
    <property type="entry name" value="Mur_ligase_C"/>
</dbReference>
<dbReference type="InterPro" id="IPR036615">
    <property type="entry name" value="Mur_ligase_C_dom_sf"/>
</dbReference>
<dbReference type="InterPro" id="IPR013221">
    <property type="entry name" value="Mur_ligase_cen"/>
</dbReference>
<dbReference type="InterPro" id="IPR005762">
    <property type="entry name" value="MurD"/>
</dbReference>
<dbReference type="NCBIfam" id="TIGR01087">
    <property type="entry name" value="murD"/>
    <property type="match status" value="1"/>
</dbReference>
<dbReference type="PANTHER" id="PTHR43692">
    <property type="entry name" value="UDP-N-ACETYLMURAMOYLALANINE--D-GLUTAMATE LIGASE"/>
    <property type="match status" value="1"/>
</dbReference>
<dbReference type="PANTHER" id="PTHR43692:SF1">
    <property type="entry name" value="UDP-N-ACETYLMURAMOYLALANINE--D-GLUTAMATE LIGASE"/>
    <property type="match status" value="1"/>
</dbReference>
<dbReference type="Pfam" id="PF02875">
    <property type="entry name" value="Mur_ligase_C"/>
    <property type="match status" value="1"/>
</dbReference>
<dbReference type="Pfam" id="PF08245">
    <property type="entry name" value="Mur_ligase_M"/>
    <property type="match status" value="1"/>
</dbReference>
<dbReference type="Pfam" id="PF21799">
    <property type="entry name" value="MurD-like_N"/>
    <property type="match status" value="1"/>
</dbReference>
<dbReference type="SUPFAM" id="SSF51984">
    <property type="entry name" value="MurCD N-terminal domain"/>
    <property type="match status" value="1"/>
</dbReference>
<dbReference type="SUPFAM" id="SSF53623">
    <property type="entry name" value="MurD-like peptide ligases, catalytic domain"/>
    <property type="match status" value="1"/>
</dbReference>
<dbReference type="SUPFAM" id="SSF53244">
    <property type="entry name" value="MurD-like peptide ligases, peptide-binding domain"/>
    <property type="match status" value="1"/>
</dbReference>
<gene>
    <name evidence="1" type="primary">murD</name>
    <name type="ordered locus">CC_2556</name>
</gene>
<name>MURD_CAUVC</name>
<organism>
    <name type="scientific">Caulobacter vibrioides (strain ATCC 19089 / CIP 103742 / CB 15)</name>
    <name type="common">Caulobacter crescentus</name>
    <dbReference type="NCBI Taxonomy" id="190650"/>
    <lineage>
        <taxon>Bacteria</taxon>
        <taxon>Pseudomonadati</taxon>
        <taxon>Pseudomonadota</taxon>
        <taxon>Alphaproteobacteria</taxon>
        <taxon>Caulobacterales</taxon>
        <taxon>Caulobacteraceae</taxon>
        <taxon>Caulobacter</taxon>
    </lineage>
</organism>